<sequence>MEDGRPVWAPHPTEGFQMGNIVDIGPDSLTIEPLGQKGKTFLALINQVFPAEEDSKKDVEDNCSLMYLNEATLLHNIKVRYSKDRIYTYVANILIAVNPYFDIPKIYSSDSIKSYQGKSLGTMPPHVFAIADKAFRDMKVLKMSQSIIVSGESGAGKTENTKFVLRYLTESYGSGQDIDDRIVEANPLLEAFGNAKTVRNNNSSRFGKFVEIHFNEKSSVVGGFVSHYLLEKSRICVQGKEERNYHIFYRLCAGASEDIRERLHLSSPDNFRYLNRGCTRYFANKETDKQILQNRKTPEHLKAGSLKDPLLDDHGDFVRMCTAMKKIGLDDEEKLDLFRVVAGVLHLGNIDFEEAGSTSGGCNLKNKSTQSLEYCAELLGLDQDDLRVSLTTRVMLTTAGGTKGTVIKVPLKVEQANNARDALAKTVYSHLFDHVVNRVNQCFPFETSSYFIGVLDIAGFEYFEHNSFEQFCINYCNEKLQQFFNERILKEEQELYQKEGLGVNEVHYVDNQDCIDLIEAKLMGILDILDEENRLPQPSDQHFTSAVHQKHKDHFRLSIPRKSKLAVHRNIRDDEGFIVRHFAGAVCYETTQFVEKNNDALHMSLESLICESRDKFIRELFESSTNNNKDTKQKAGKLSFISVGNKFKTQLNLLLDKLRSTGASFIRCIKPNLKMTSHDFEGAQILSQLQCSGMVSVLDLMQGGFPSRASFHELYNMYKKYMPDKLARLDPRLFCKALFKALGLNEVDYKFGLTKVFFRPGKFAEFDQIMKSDPDHLAQLVKRVNHWLICSRWKKVQWCSLSVIKLKNKIKYRAEACIKMQKTIRMWLCKRRHKPRIDGLVKVGTLKKRLDKFNEVVSALKDGKAEMNKQVKDLEISIDALMAKIKSTMMTREQIQKEYDALVKSSEVLLSALQKKKQQEEEAERLRRIQEEMEKERKRREEDEQRRRKEEEERRMKLEMEAKRKQEEEERKKREDDEKRIQAEVEAQLARQREEESQQQAVLEQERRDRELALRIARSEAELIIDEAQADPAALRSLDFHPVTSKINGTRRTMTPEQMAKEMSEILSRGPAVQATKAAAGTKKHDLSKWKYAELRDTINTSCDIELLAACREEFHRRLKVYHAWKSKNKKRNTETEQRAPKSVTDYDFAPFLNNSPQQNPAAQLPARQQEIEMNRQQRFFRIPFIRPADQYKDPQNKKKGWWYAHFDGPWIARQMELHPDKPPILLVAGKDDMEMCELNLEETGLTRKRGAEILPRQFEEIWERCGGIQYLQSAIESRQARPTYATAMLQNLLK</sequence>
<organism evidence="11">
    <name type="scientific">Bos taurus</name>
    <name type="common">Bovine</name>
    <dbReference type="NCBI Taxonomy" id="9913"/>
    <lineage>
        <taxon>Eukaryota</taxon>
        <taxon>Metazoa</taxon>
        <taxon>Chordata</taxon>
        <taxon>Craniata</taxon>
        <taxon>Vertebrata</taxon>
        <taxon>Euteleostomi</taxon>
        <taxon>Mammalia</taxon>
        <taxon>Eutheria</taxon>
        <taxon>Laurasiatheria</taxon>
        <taxon>Artiodactyla</taxon>
        <taxon>Ruminantia</taxon>
        <taxon>Pecora</taxon>
        <taxon>Bovidae</taxon>
        <taxon>Bovinae</taxon>
        <taxon>Bos</taxon>
    </lineage>
</organism>
<feature type="chain" id="PRO_0000446902" description="Unconventional myosin-VI">
    <location>
        <begin position="1"/>
        <end position="1295"/>
    </location>
</feature>
<feature type="domain" description="Myosin N-terminal SH3-like" evidence="7">
    <location>
        <begin position="2"/>
        <end position="53"/>
    </location>
</feature>
<feature type="domain" description="Myosin motor" evidence="6">
    <location>
        <begin position="57"/>
        <end position="771"/>
    </location>
</feature>
<feature type="domain" description="IQ" evidence="1">
    <location>
        <begin position="813"/>
        <end position="842"/>
    </location>
</feature>
<feature type="region of interest" description="Responsible for slow ATPase activity" evidence="1">
    <location>
        <begin position="273"/>
        <end position="317"/>
    </location>
</feature>
<feature type="region of interest" description="Actin-binding" evidence="6">
    <location>
        <begin position="651"/>
        <end position="673"/>
    </location>
</feature>
<feature type="region of interest" description="Required for binding calmodulin" evidence="1">
    <location>
        <begin position="782"/>
        <end position="810"/>
    </location>
</feature>
<feature type="region of interest" description="Three-helix bundle" evidence="1">
    <location>
        <begin position="835"/>
        <end position="916"/>
    </location>
</feature>
<feature type="region of interest" description="SAH" evidence="4">
    <location>
        <begin position="917"/>
        <end position="984"/>
    </location>
</feature>
<feature type="region of interest" description="Disordered" evidence="8">
    <location>
        <begin position="934"/>
        <end position="955"/>
    </location>
</feature>
<feature type="region of interest" description="Interaction with TAX1BP1 and CALCOCO2/NDP52" evidence="4">
    <location>
        <begin position="1061"/>
        <end position="1286"/>
    </location>
</feature>
<feature type="region of interest" description="Interaction with OPTN" evidence="3">
    <location>
        <begin position="1117"/>
        <end position="1119"/>
    </location>
</feature>
<feature type="region of interest" description="Interaction with TOM1" evidence="4">
    <location>
        <begin position="1158"/>
        <end position="1286"/>
    </location>
</feature>
<feature type="binding site" evidence="6">
    <location>
        <begin position="151"/>
        <end position="158"/>
    </location>
    <ligand>
        <name>ATP</name>
        <dbReference type="ChEBI" id="CHEBI:30616"/>
    </ligand>
</feature>
<feature type="modified residue" description="Phosphoserine" evidence="4">
    <location>
        <position position="267"/>
    </location>
</feature>
<feature type="modified residue" description="Phosphothreonine" evidence="4">
    <location>
        <position position="405"/>
    </location>
</feature>
<feature type="modified residue" description="Phosphoserine" evidence="2">
    <location>
        <position position="604"/>
    </location>
</feature>
<feature type="modified residue" description="Phosphoserine" evidence="2">
    <location>
        <position position="1156"/>
    </location>
</feature>
<protein>
    <recommendedName>
        <fullName evidence="10">Unconventional myosin-VI</fullName>
    </recommendedName>
    <alternativeName>
        <fullName evidence="10">Unconventional myosin-6</fullName>
    </alternativeName>
</protein>
<proteinExistence type="evidence at protein level"/>
<reference evidence="11" key="1">
    <citation type="journal article" date="2009" name="Genome Biol.">
        <title>A whole-genome assembly of the domestic cow, Bos taurus.</title>
        <authorList>
            <person name="Zimin A.V."/>
            <person name="Delcher A.L."/>
            <person name="Florea L."/>
            <person name="Kelley D.R."/>
            <person name="Schatz M.C."/>
            <person name="Puiu D."/>
            <person name="Hanrahan F."/>
            <person name="Pertea G."/>
            <person name="Van Tassell C.P."/>
            <person name="Sonstegard T.S."/>
            <person name="Marcais G."/>
            <person name="Roberts M."/>
            <person name="Subramanian P."/>
            <person name="Yorke J.A."/>
            <person name="Salzberg S.L."/>
        </authorList>
    </citation>
    <scope>NUCLEOTIDE SEQUENCE [LARGE SCALE GENOMIC DNA]</scope>
    <source>
        <strain evidence="11">Hereford</strain>
    </source>
</reference>
<reference evidence="10" key="2">
    <citation type="journal article" date="2011" name="Invest. Ophthalmol. Vis. Sci.">
        <title>Insight into the role of Ca2+-binding protein 5 in vesicle exocytosis.</title>
        <authorList>
            <person name="Sokal I."/>
            <person name="Haeseleer F."/>
        </authorList>
    </citation>
    <scope>INTERACTION WITH CABP5</scope>
    <scope>TISSUE SPECIFICITY</scope>
    <scope>IDENTIFICATION BY MASS SPECTROMETRY</scope>
</reference>
<comment type="function">
    <text evidence="1 2 4">Myosins are actin-based motor molecules with ATPase activity. Unconventional myosins serve in intracellular movements (By similarity). Myosin 6 is a reverse-direction motor protein that moves towards the minus-end of actin filaments (By similarity). Has slow rate of actin-activated ADP release due to weak ATP binding. Functions in a variety of intracellular processes such as vesicular membrane trafficking and cell migration (By similarity). Required for the structural integrity of the Golgi apparatus via the p53-dependent pro-survival pathway. Appears to be involved in a very early step of clathrin-mediated endocytosis in polarized epithelial cells (By similarity). Together with TOM1, mediates delivery of endocytic cargo to autophagosomes thereby promoting autophagosome maturation and driving fusion with lysosomes (By similarity). Links TOM1 with autophagy receptors, such as TAX1BP1; CALCOCO2/NDP52 and OPTN (By similarity). May act as a regulator of F-actin dynamics (By similarity). As part of the DISP complex, may regulate the association of septins with actin and thereby regulate the actin cytoskeleton (By similarity). May play a role in transporting DAB2 from the plasma membrane to specific cellular targets (By similarity). May play a role in the extension and network organization of neurites (By similarity). Required for structural integrity of inner ear hair cells (By similarity). Required for the correct localization of CLIC5 and RDX at the stereocilium base (By similarity). Modulates RNA polymerase II-dependent transcription (By similarity).</text>
</comment>
<comment type="subunit">
    <text evidence="1 2 3 4 9">Homodimer; dimerization seems to implicate the unfolding of the three-helix bundle region creating an additional calmodulin binding site, and cargo binding (By similarity). Able to function as a monomer under specific conditions in vitro (By similarity). Forms a complex with CFTR and DAB2 in the apical membrane of epithelial cells (By similarity). Component of the DISP/DOCK7-induced septin displacement complex, at least composed of DOCK7, LRCH3 and MYO6 (By similarity). Binding to calmodulin through a unique insert, not found in other myosins, located in the neck region between the motor domain and the IQ domain appears to contribute to the directionality reversal (By similarity). This interaction occurs only if the C-terminal lobe of calmodulin is occupied by calcium (By similarity). Interaction with F-actin/ACTN1 occurs only at the apical brush border domain of the proximal tubule cells (By similarity). Interacts with DAB2 (By similarity). In vitro, the C-terminal globular tail binds a C-terminal region of DAB2 (By similarity). Interacts with CFTR (By similarity). Interacts with CABP5 (PubMed:22039235). Interacts (via residues 1158-1286) with TOM1 (via residues 392-463) (By similarity). Interacts (via residues 1060-1285) with OPTN (By similarity). Interacts (via residues 1060-1285) with TAX1BP1 and CALCOCO2/NDP52 (By similarity). Interacts with TOM1L2 (By similarity). Interacts with CLIC5; may work together in a complex which also includes RDX and MYO6 to stabilize linkages between the plasma membrane and subjacent actin cytoskeleton at the base of stereocilia (By similarity).</text>
</comment>
<comment type="subcellular location">
    <subcellularLocation>
        <location evidence="4">Golgi apparatus</location>
        <location evidence="4">trans-Golgi network membrane</location>
        <topology evidence="4">Peripheral membrane protein</topology>
    </subcellularLocation>
    <subcellularLocation>
        <location evidence="4">Golgi apparatus</location>
    </subcellularLocation>
    <subcellularLocation>
        <location evidence="4">Nucleus</location>
    </subcellularLocation>
    <subcellularLocation>
        <location evidence="4">Cytoplasm</location>
        <location evidence="4">Perinuclear region</location>
    </subcellularLocation>
    <subcellularLocation>
        <location evidence="4">Membrane</location>
        <location evidence="4">Clathrin-coated pit</location>
    </subcellularLocation>
    <subcellularLocation>
        <location evidence="4">Cytoplasmic vesicle</location>
        <location evidence="4">Clathrin-coated vesicle</location>
    </subcellularLocation>
    <subcellularLocation>
        <location evidence="4">Cell projection</location>
        <location evidence="4">Filopodium</location>
    </subcellularLocation>
    <subcellularLocation>
        <location evidence="1">Cell projection</location>
        <location evidence="1">Ruffle membrane</location>
    </subcellularLocation>
    <subcellularLocation>
        <location evidence="4">Cell projection</location>
        <location evidence="4">Microvillus</location>
    </subcellularLocation>
    <subcellularLocation>
        <location evidence="1">Cytoplasm</location>
        <location evidence="1">Cytosol</location>
    </subcellularLocation>
    <text evidence="1 3 4">Also present in endocytic vesicles (By similarity). Translocates from membrane ruffles, endocytic vesicles and cytoplasm to Golgi apparatus, perinuclear membrane and nucleus through induction by p53 and p53-induced DNA damage. Recruited into membrane ruffles from cell surface by EGF-stimulation. Colocalizes with DAB2 in clathrin-coated pits/vesicles (By similarity). Colocalizes with OPTN at the Golgi complex and in vesicular structures close to the plasma membrane (By similarity).</text>
</comment>
<comment type="tissue specificity">
    <text evidence="9">Expressed in the retina (at protein level).</text>
</comment>
<comment type="domain">
    <text evidence="1">Divided into three regions: a N-terminal motor (head) domain, followed by a neck domain consisting of a calmodulin-binding linker domain and a single IQ motif, and a C-terminal tail region with a three-helix bundle region, a SAH domain and a unique globular domain required for interaction with other proteins such as cargo-binding.</text>
</comment>
<comment type="domain">
    <text evidence="4">The SAH (single alpha-helix) region is characterized by a high content of charged residues which are predicted to stabilize the alpha-helical structure by ionic bonds. Its contribution to the mechanism conferring the myosin movement on actin filaments is debated.</text>
</comment>
<comment type="PTM">
    <text evidence="1">Phosphorylation in the motor domain, induced by EGF, results in translocation of MYO6 from the cell surface to membrane ruffles and affects F-actin dynamics. Phosphorylated in vitro by p21-activated kinase (PAK).</text>
</comment>
<comment type="similarity">
    <text evidence="5">Belongs to the TRAFAC class myosin-kinesin ATPase superfamily. Myosin family.</text>
</comment>
<comment type="caution">
    <text evidence="10">Represents an unconventional myosin. This protein should not be confused with the conventional myosin-6 (MYH6).</text>
</comment>
<comment type="caution">
    <text evidence="10">Originally predicted to contain a coiled coil domain but generally accepted to contain a stable SAH domain instead.</text>
</comment>
<gene>
    <name evidence="4" type="primary">MYO6</name>
</gene>
<accession>E1BPK6</accession>
<name>MYO6_BOVIN</name>
<keyword id="KW-0009">Actin-binding</keyword>
<keyword id="KW-0067">ATP-binding</keyword>
<keyword id="KW-0112">Calmodulin-binding</keyword>
<keyword id="KW-1003">Cell membrane</keyword>
<keyword id="KW-0966">Cell projection</keyword>
<keyword id="KW-0168">Coated pit</keyword>
<keyword id="KW-0963">Cytoplasm</keyword>
<keyword id="KW-0968">Cytoplasmic vesicle</keyword>
<keyword id="KW-0254">Endocytosis</keyword>
<keyword id="KW-0333">Golgi apparatus</keyword>
<keyword id="KW-1009">Hearing</keyword>
<keyword id="KW-0472">Membrane</keyword>
<keyword id="KW-0505">Motor protein</keyword>
<keyword id="KW-0518">Myosin</keyword>
<keyword id="KW-0547">Nucleotide-binding</keyword>
<keyword id="KW-0539">Nucleus</keyword>
<keyword id="KW-0597">Phosphoprotein</keyword>
<keyword id="KW-0653">Protein transport</keyword>
<keyword id="KW-1185">Reference proteome</keyword>
<keyword id="KW-0813">Transport</keyword>
<evidence type="ECO:0000250" key="1">
    <source>
        <dbReference type="UniProtKB" id="Q29122"/>
    </source>
</evidence>
<evidence type="ECO:0000250" key="2">
    <source>
        <dbReference type="UniProtKB" id="Q64331"/>
    </source>
</evidence>
<evidence type="ECO:0000250" key="3">
    <source>
        <dbReference type="UniProtKB" id="Q9I8D1"/>
    </source>
</evidence>
<evidence type="ECO:0000250" key="4">
    <source>
        <dbReference type="UniProtKB" id="Q9UM54"/>
    </source>
</evidence>
<evidence type="ECO:0000255" key="5"/>
<evidence type="ECO:0000255" key="6">
    <source>
        <dbReference type="PROSITE-ProRule" id="PRU00782"/>
    </source>
</evidence>
<evidence type="ECO:0000255" key="7">
    <source>
        <dbReference type="PROSITE-ProRule" id="PRU01190"/>
    </source>
</evidence>
<evidence type="ECO:0000256" key="8">
    <source>
        <dbReference type="SAM" id="MobiDB-lite"/>
    </source>
</evidence>
<evidence type="ECO:0000269" key="9">
    <source>
    </source>
</evidence>
<evidence type="ECO:0000305" key="10"/>
<evidence type="ECO:0000312" key="11">
    <source>
        <dbReference type="Proteomes" id="UP000009136"/>
    </source>
</evidence>
<dbReference type="EMBL" id="DAAA02025285">
    <property type="status" value="NOT_ANNOTATED_CDS"/>
    <property type="molecule type" value="Genomic_DNA"/>
</dbReference>
<dbReference type="EMBL" id="DAAA02025286">
    <property type="status" value="NOT_ANNOTATED_CDS"/>
    <property type="molecule type" value="Genomic_DNA"/>
</dbReference>
<dbReference type="RefSeq" id="XP_005210731.1">
    <property type="nucleotide sequence ID" value="XM_005210674.5"/>
</dbReference>
<dbReference type="RefSeq" id="XP_005210732.1">
    <property type="nucleotide sequence ID" value="XM_005210675.3"/>
</dbReference>
<dbReference type="RefSeq" id="XP_015328260.1">
    <property type="nucleotide sequence ID" value="XM_015472774.3"/>
</dbReference>
<dbReference type="SMR" id="E1BPK6"/>
<dbReference type="FunCoup" id="E1BPK6">
    <property type="interactions" value="653"/>
</dbReference>
<dbReference type="STRING" id="9913.ENSBTAP00000022276"/>
<dbReference type="PaxDb" id="9913-ENSBTAP00000022276"/>
<dbReference type="Ensembl" id="ENSBTAT00000114709.1">
    <property type="protein sequence ID" value="ENSBTAP00000081001.1"/>
    <property type="gene ID" value="ENSBTAG00000016751.7"/>
</dbReference>
<dbReference type="GeneID" id="535127"/>
<dbReference type="CTD" id="4646"/>
<dbReference type="VGNC" id="VGNC:31829">
    <property type="gene designation" value="MYO6"/>
</dbReference>
<dbReference type="eggNOG" id="KOG0163">
    <property type="taxonomic scope" value="Eukaryota"/>
</dbReference>
<dbReference type="GeneTree" id="ENSGT00940000156078"/>
<dbReference type="HOGENOM" id="CLU_000192_7_2_1"/>
<dbReference type="InParanoid" id="E1BPK6"/>
<dbReference type="OrthoDB" id="6108017at2759"/>
<dbReference type="TreeFam" id="TF351449"/>
<dbReference type="Proteomes" id="UP000009136">
    <property type="component" value="Chromosome 9"/>
</dbReference>
<dbReference type="GO" id="GO:0015629">
    <property type="term" value="C:actin cytoskeleton"/>
    <property type="evidence" value="ECO:0000318"/>
    <property type="project" value="GO_Central"/>
</dbReference>
<dbReference type="GO" id="GO:0045334">
    <property type="term" value="C:clathrin-coated endocytic vesicle"/>
    <property type="evidence" value="ECO:0007669"/>
    <property type="project" value="Ensembl"/>
</dbReference>
<dbReference type="GO" id="GO:0005905">
    <property type="term" value="C:clathrin-coated pit"/>
    <property type="evidence" value="ECO:0007669"/>
    <property type="project" value="UniProtKB-SubCell"/>
</dbReference>
<dbReference type="GO" id="GO:0005737">
    <property type="term" value="C:cytoplasm"/>
    <property type="evidence" value="ECO:0000318"/>
    <property type="project" value="GO_Central"/>
</dbReference>
<dbReference type="GO" id="GO:0005829">
    <property type="term" value="C:cytosol"/>
    <property type="evidence" value="ECO:0007669"/>
    <property type="project" value="UniProtKB-SubCell"/>
</dbReference>
<dbReference type="GO" id="GO:0030139">
    <property type="term" value="C:endocytic vesicle"/>
    <property type="evidence" value="ECO:0000318"/>
    <property type="project" value="GO_Central"/>
</dbReference>
<dbReference type="GO" id="GO:0031941">
    <property type="term" value="C:filamentous actin"/>
    <property type="evidence" value="ECO:0007669"/>
    <property type="project" value="Ensembl"/>
</dbReference>
<dbReference type="GO" id="GO:0030175">
    <property type="term" value="C:filopodium"/>
    <property type="evidence" value="ECO:0007669"/>
    <property type="project" value="UniProtKB-SubCell"/>
</dbReference>
<dbReference type="GO" id="GO:0005794">
    <property type="term" value="C:Golgi apparatus"/>
    <property type="evidence" value="ECO:0007669"/>
    <property type="project" value="UniProtKB-SubCell"/>
</dbReference>
<dbReference type="GO" id="GO:0005902">
    <property type="term" value="C:microvillus"/>
    <property type="evidence" value="ECO:0007669"/>
    <property type="project" value="UniProtKB-SubCell"/>
</dbReference>
<dbReference type="GO" id="GO:0016459">
    <property type="term" value="C:myosin complex"/>
    <property type="evidence" value="ECO:0007669"/>
    <property type="project" value="UniProtKB-KW"/>
</dbReference>
<dbReference type="GO" id="GO:0031965">
    <property type="term" value="C:nuclear membrane"/>
    <property type="evidence" value="ECO:0007669"/>
    <property type="project" value="Ensembl"/>
</dbReference>
<dbReference type="GO" id="GO:0005654">
    <property type="term" value="C:nucleoplasm"/>
    <property type="evidence" value="ECO:0007669"/>
    <property type="project" value="Ensembl"/>
</dbReference>
<dbReference type="GO" id="GO:0048471">
    <property type="term" value="C:perinuclear region of cytoplasm"/>
    <property type="evidence" value="ECO:0007669"/>
    <property type="project" value="UniProtKB-SubCell"/>
</dbReference>
<dbReference type="GO" id="GO:0005886">
    <property type="term" value="C:plasma membrane"/>
    <property type="evidence" value="ECO:0000318"/>
    <property type="project" value="GO_Central"/>
</dbReference>
<dbReference type="GO" id="GO:0001726">
    <property type="term" value="C:ruffle"/>
    <property type="evidence" value="ECO:0000318"/>
    <property type="project" value="GO_Central"/>
</dbReference>
<dbReference type="GO" id="GO:0032587">
    <property type="term" value="C:ruffle membrane"/>
    <property type="evidence" value="ECO:0007669"/>
    <property type="project" value="UniProtKB-SubCell"/>
</dbReference>
<dbReference type="GO" id="GO:0051015">
    <property type="term" value="F:actin filament binding"/>
    <property type="evidence" value="ECO:0000318"/>
    <property type="project" value="GO_Central"/>
</dbReference>
<dbReference type="GO" id="GO:0005524">
    <property type="term" value="F:ATP binding"/>
    <property type="evidence" value="ECO:0007669"/>
    <property type="project" value="UniProtKB-KW"/>
</dbReference>
<dbReference type="GO" id="GO:0005516">
    <property type="term" value="F:calmodulin binding"/>
    <property type="evidence" value="ECO:0007669"/>
    <property type="project" value="UniProtKB-KW"/>
</dbReference>
<dbReference type="GO" id="GO:0000146">
    <property type="term" value="F:microfilament motor activity"/>
    <property type="evidence" value="ECO:0000318"/>
    <property type="project" value="GO_Central"/>
</dbReference>
<dbReference type="GO" id="GO:0007015">
    <property type="term" value="P:actin filament organization"/>
    <property type="evidence" value="ECO:0000318"/>
    <property type="project" value="GO_Central"/>
</dbReference>
<dbReference type="GO" id="GO:0030048">
    <property type="term" value="P:actin filament-based movement"/>
    <property type="evidence" value="ECO:0000318"/>
    <property type="project" value="GO_Central"/>
</dbReference>
<dbReference type="GO" id="GO:0030330">
    <property type="term" value="P:DNA damage response, signal transduction by p53 class mediator"/>
    <property type="evidence" value="ECO:0007669"/>
    <property type="project" value="Ensembl"/>
</dbReference>
<dbReference type="GO" id="GO:0006897">
    <property type="term" value="P:endocytosis"/>
    <property type="evidence" value="ECO:0007669"/>
    <property type="project" value="UniProtKB-KW"/>
</dbReference>
<dbReference type="GO" id="GO:0042491">
    <property type="term" value="P:inner ear auditory receptor cell differentiation"/>
    <property type="evidence" value="ECO:0000318"/>
    <property type="project" value="GO_Central"/>
</dbReference>
<dbReference type="GO" id="GO:0042472">
    <property type="term" value="P:inner ear morphogenesis"/>
    <property type="evidence" value="ECO:0000318"/>
    <property type="project" value="GO_Central"/>
</dbReference>
<dbReference type="GO" id="GO:0008104">
    <property type="term" value="P:protein localization"/>
    <property type="evidence" value="ECO:0000250"/>
    <property type="project" value="UniProtKB"/>
</dbReference>
<dbReference type="GO" id="GO:0015031">
    <property type="term" value="P:protein transport"/>
    <property type="evidence" value="ECO:0007669"/>
    <property type="project" value="UniProtKB-KW"/>
</dbReference>
<dbReference type="GO" id="GO:0051046">
    <property type="term" value="P:regulation of secretion"/>
    <property type="evidence" value="ECO:0007669"/>
    <property type="project" value="Ensembl"/>
</dbReference>
<dbReference type="GO" id="GO:0007605">
    <property type="term" value="P:sensory perception of sound"/>
    <property type="evidence" value="ECO:0007669"/>
    <property type="project" value="UniProtKB-KW"/>
</dbReference>
<dbReference type="CDD" id="cd21759">
    <property type="entry name" value="CBD_MYO6-like"/>
    <property type="match status" value="1"/>
</dbReference>
<dbReference type="CDD" id="cd22294">
    <property type="entry name" value="MYO6_MIU_linker"/>
    <property type="match status" value="1"/>
</dbReference>
<dbReference type="CDD" id="cd01382">
    <property type="entry name" value="MYSc_Myo6"/>
    <property type="match status" value="1"/>
</dbReference>
<dbReference type="CDD" id="cd21958">
    <property type="entry name" value="MyUb_Myo6"/>
    <property type="match status" value="1"/>
</dbReference>
<dbReference type="FunFam" id="1.20.58.530:FF:000006">
    <property type="entry name" value="Putative unconventional myosin-VI"/>
    <property type="match status" value="1"/>
</dbReference>
<dbReference type="FunFam" id="2.30.30.360:FF:000002">
    <property type="entry name" value="Unconventional myosin-VI"/>
    <property type="match status" value="1"/>
</dbReference>
<dbReference type="FunFam" id="1.20.120.720:FF:000005">
    <property type="entry name" value="unconventional myosin-VI isoform X1"/>
    <property type="match status" value="1"/>
</dbReference>
<dbReference type="FunFam" id="3.30.70.1590:FF:000002">
    <property type="entry name" value="unconventional myosin-VI isoform X1"/>
    <property type="match status" value="1"/>
</dbReference>
<dbReference type="FunFam" id="3.40.850.10:FF:000018">
    <property type="entry name" value="unconventional myosin-VI isoform X1"/>
    <property type="match status" value="1"/>
</dbReference>
<dbReference type="FunFam" id="3.40.850.10:FF:000030">
    <property type="entry name" value="unconventional myosin-VI isoform X1"/>
    <property type="match status" value="1"/>
</dbReference>
<dbReference type="FunFam" id="1.10.10.820:FF:000005">
    <property type="entry name" value="unconventional myosin-VI isoform X2"/>
    <property type="match status" value="1"/>
</dbReference>
<dbReference type="Gene3D" id="1.10.10.820">
    <property type="match status" value="1"/>
</dbReference>
<dbReference type="Gene3D" id="1.20.58.530">
    <property type="match status" value="1"/>
</dbReference>
<dbReference type="Gene3D" id="3.30.70.1590">
    <property type="match status" value="1"/>
</dbReference>
<dbReference type="Gene3D" id="6.10.220.10">
    <property type="match status" value="1"/>
</dbReference>
<dbReference type="Gene3D" id="3.40.850.10">
    <property type="entry name" value="Kinesin motor domain"/>
    <property type="match status" value="2"/>
</dbReference>
<dbReference type="Gene3D" id="2.30.30.360">
    <property type="entry name" value="Myosin S1 fragment, N-terminal"/>
    <property type="match status" value="1"/>
</dbReference>
<dbReference type="Gene3D" id="1.20.120.720">
    <property type="entry name" value="Myosin VI head, motor domain, U50 subdomain"/>
    <property type="match status" value="1"/>
</dbReference>
<dbReference type="InterPro" id="IPR036961">
    <property type="entry name" value="Kinesin_motor_dom_sf"/>
</dbReference>
<dbReference type="InterPro" id="IPR049016">
    <property type="entry name" value="MYO6_lever"/>
</dbReference>
<dbReference type="InterPro" id="IPR032412">
    <property type="entry name" value="Myosin-VI_CBD"/>
</dbReference>
<dbReference type="InterPro" id="IPR001609">
    <property type="entry name" value="Myosin_head_motor_dom-like"/>
</dbReference>
<dbReference type="InterPro" id="IPR004009">
    <property type="entry name" value="Myosin_N"/>
</dbReference>
<dbReference type="InterPro" id="IPR008989">
    <property type="entry name" value="Myosin_S1_N"/>
</dbReference>
<dbReference type="InterPro" id="IPR036114">
    <property type="entry name" value="MYSc_Myo6"/>
</dbReference>
<dbReference type="InterPro" id="IPR027417">
    <property type="entry name" value="P-loop_NTPase"/>
</dbReference>
<dbReference type="PANTHER" id="PTHR13140">
    <property type="entry name" value="MYOSIN"/>
    <property type="match status" value="1"/>
</dbReference>
<dbReference type="PANTHER" id="PTHR13140:SF745">
    <property type="entry name" value="UNCONVENTIONAL MYOSIN-VI"/>
    <property type="match status" value="1"/>
</dbReference>
<dbReference type="Pfam" id="PF21521">
    <property type="entry name" value="MYO6_lever"/>
    <property type="match status" value="1"/>
</dbReference>
<dbReference type="Pfam" id="PF16521">
    <property type="entry name" value="Myosin-VI_CBD"/>
    <property type="match status" value="1"/>
</dbReference>
<dbReference type="Pfam" id="PF00063">
    <property type="entry name" value="Myosin_head"/>
    <property type="match status" value="1"/>
</dbReference>
<dbReference type="PRINTS" id="PR00193">
    <property type="entry name" value="MYOSINHEAVY"/>
</dbReference>
<dbReference type="SMART" id="SM00242">
    <property type="entry name" value="MYSc"/>
    <property type="match status" value="1"/>
</dbReference>
<dbReference type="SUPFAM" id="SSF52540">
    <property type="entry name" value="P-loop containing nucleoside triphosphate hydrolases"/>
    <property type="match status" value="1"/>
</dbReference>
<dbReference type="PROSITE" id="PS51456">
    <property type="entry name" value="MYOSIN_MOTOR"/>
    <property type="match status" value="1"/>
</dbReference>
<dbReference type="PROSITE" id="PS51844">
    <property type="entry name" value="SH3_LIKE"/>
    <property type="match status" value="1"/>
</dbReference>